<dbReference type="EMBL" id="CU928162">
    <property type="protein sequence ID" value="CAR07853.2"/>
    <property type="molecule type" value="Genomic_DNA"/>
</dbReference>
<dbReference type="SMR" id="B7MUT7"/>
<dbReference type="KEGG" id="ecq:ECED1_1656"/>
<dbReference type="HOGENOM" id="CLU_001265_61_1_6"/>
<dbReference type="Proteomes" id="UP000000748">
    <property type="component" value="Chromosome"/>
</dbReference>
<dbReference type="GO" id="GO:0005886">
    <property type="term" value="C:plasma membrane"/>
    <property type="evidence" value="ECO:0007669"/>
    <property type="project" value="UniProtKB-SubCell"/>
</dbReference>
<dbReference type="GO" id="GO:0015144">
    <property type="term" value="F:carbohydrate transmembrane transporter activity"/>
    <property type="evidence" value="ECO:0007669"/>
    <property type="project" value="UniProtKB-UniRule"/>
</dbReference>
<dbReference type="CDD" id="cd17324">
    <property type="entry name" value="MFS_NepI_like"/>
    <property type="match status" value="1"/>
</dbReference>
<dbReference type="FunFam" id="1.20.1250.20:FF:000079">
    <property type="entry name" value="Probable sugar efflux transporter"/>
    <property type="match status" value="1"/>
</dbReference>
<dbReference type="Gene3D" id="1.20.1250.20">
    <property type="entry name" value="MFS general substrate transporter like domains"/>
    <property type="match status" value="1"/>
</dbReference>
<dbReference type="HAMAP" id="MF_00517">
    <property type="entry name" value="MFS_SotB"/>
    <property type="match status" value="1"/>
</dbReference>
<dbReference type="InterPro" id="IPR011701">
    <property type="entry name" value="MFS"/>
</dbReference>
<dbReference type="InterPro" id="IPR020846">
    <property type="entry name" value="MFS_dom"/>
</dbReference>
<dbReference type="InterPro" id="IPR050189">
    <property type="entry name" value="MFS_Efflux_Transporters"/>
</dbReference>
<dbReference type="InterPro" id="IPR036259">
    <property type="entry name" value="MFS_trans_sf"/>
</dbReference>
<dbReference type="InterPro" id="IPR023495">
    <property type="entry name" value="Sugar_effux_transptr_put"/>
</dbReference>
<dbReference type="NCBIfam" id="NF002921">
    <property type="entry name" value="PRK03545.1"/>
    <property type="match status" value="1"/>
</dbReference>
<dbReference type="PANTHER" id="PTHR43124">
    <property type="entry name" value="PURINE EFFLUX PUMP PBUE"/>
    <property type="match status" value="1"/>
</dbReference>
<dbReference type="PANTHER" id="PTHR43124:SF4">
    <property type="entry name" value="SUGAR EFFLUX TRANSPORTER"/>
    <property type="match status" value="1"/>
</dbReference>
<dbReference type="Pfam" id="PF07690">
    <property type="entry name" value="MFS_1"/>
    <property type="match status" value="1"/>
</dbReference>
<dbReference type="SUPFAM" id="SSF103473">
    <property type="entry name" value="MFS general substrate transporter"/>
    <property type="match status" value="1"/>
</dbReference>
<dbReference type="PROSITE" id="PS50850">
    <property type="entry name" value="MFS"/>
    <property type="match status" value="1"/>
</dbReference>
<comment type="function">
    <text evidence="1">Involved in the efflux of sugars. The physiological role may be the reduction of the intracellular concentration of toxic sugars or sugar metabolites.</text>
</comment>
<comment type="subcellular location">
    <subcellularLocation>
        <location evidence="1">Cell inner membrane</location>
        <topology evidence="1">Multi-pass membrane protein</topology>
    </subcellularLocation>
</comment>
<comment type="similarity">
    <text evidence="1">Belongs to the major facilitator superfamily. SotB (TC 2.A.1.2) family.</text>
</comment>
<organism>
    <name type="scientific">Escherichia coli O81 (strain ED1a)</name>
    <dbReference type="NCBI Taxonomy" id="585397"/>
    <lineage>
        <taxon>Bacteria</taxon>
        <taxon>Pseudomonadati</taxon>
        <taxon>Pseudomonadota</taxon>
        <taxon>Gammaproteobacteria</taxon>
        <taxon>Enterobacterales</taxon>
        <taxon>Enterobacteriaceae</taxon>
        <taxon>Escherichia</taxon>
    </lineage>
</organism>
<keyword id="KW-0997">Cell inner membrane</keyword>
<keyword id="KW-1003">Cell membrane</keyword>
<keyword id="KW-0472">Membrane</keyword>
<keyword id="KW-0762">Sugar transport</keyword>
<keyword id="KW-0812">Transmembrane</keyword>
<keyword id="KW-1133">Transmembrane helix</keyword>
<keyword id="KW-0813">Transport</keyword>
<name>SOTB_ECO81</name>
<feature type="chain" id="PRO_1000197458" description="Probable sugar efflux transporter">
    <location>
        <begin position="1"/>
        <end position="396"/>
    </location>
</feature>
<feature type="transmembrane region" description="Helical" evidence="1">
    <location>
        <begin position="15"/>
        <end position="35"/>
    </location>
</feature>
<feature type="transmembrane region" description="Helical" evidence="1">
    <location>
        <begin position="50"/>
        <end position="70"/>
    </location>
</feature>
<feature type="transmembrane region" description="Helical" evidence="1">
    <location>
        <begin position="81"/>
        <end position="101"/>
    </location>
</feature>
<feature type="transmembrane region" description="Helical" evidence="1">
    <location>
        <begin position="103"/>
        <end position="123"/>
    </location>
</feature>
<feature type="transmembrane region" description="Helical" evidence="1">
    <location>
        <begin position="136"/>
        <end position="156"/>
    </location>
</feature>
<feature type="transmembrane region" description="Helical" evidence="1">
    <location>
        <begin position="170"/>
        <end position="190"/>
    </location>
</feature>
<feature type="transmembrane region" description="Helical" evidence="1">
    <location>
        <begin position="209"/>
        <end position="229"/>
    </location>
</feature>
<feature type="transmembrane region" description="Helical" evidence="1">
    <location>
        <begin position="246"/>
        <end position="266"/>
    </location>
</feature>
<feature type="transmembrane region" description="Helical" evidence="1">
    <location>
        <begin position="275"/>
        <end position="295"/>
    </location>
</feature>
<feature type="transmembrane region" description="Helical" evidence="1">
    <location>
        <begin position="299"/>
        <end position="319"/>
    </location>
</feature>
<feature type="transmembrane region" description="Helical" evidence="1">
    <location>
        <begin position="333"/>
        <end position="353"/>
    </location>
</feature>
<feature type="transmembrane region" description="Helical" evidence="1">
    <location>
        <begin position="364"/>
        <end position="384"/>
    </location>
</feature>
<proteinExistence type="inferred from homology"/>
<accession>B7MUT7</accession>
<evidence type="ECO:0000255" key="1">
    <source>
        <dbReference type="HAMAP-Rule" id="MF_00517"/>
    </source>
</evidence>
<protein>
    <recommendedName>
        <fullName evidence="1">Probable sugar efflux transporter</fullName>
    </recommendedName>
</protein>
<sequence length="396" mass="42547">MTTNTVSRKVAWLRVVTLAVAAFIFNTTEFVPVGLLSDIAHSFHMQTAQVGIMLTIYAWVVALMSLPFMLMTSQVERRKLLICLFVVFIASHVLSFLSWSFTVLVISRIGVAFAHAIFWSITASLAIRMAPAGKRAQALSLIATGTALAMVLGLPLGRIVGQYFGWRMTFFAIGIGALITLLCLIKLLPLLPSEHSGSLKSLPLLFRRPALMSIYLLTVVVVTAHYTAYSYIEPFVQNIAGFSANFATALLLLLGGAGIIGSVIFGKLGNQYASALVSTAIALLLVCLALLLPAANSEIHLGVLSIFWGIAMMIIGLGMQVKVLALAPDATDVAMALFSGIFNIGIGAGALVGNQVSLHWSMSMIGYVGAVPAFAALIWSIIIFRRWPVTLEEQTQ</sequence>
<reference key="1">
    <citation type="journal article" date="2009" name="PLoS Genet.">
        <title>Organised genome dynamics in the Escherichia coli species results in highly diverse adaptive paths.</title>
        <authorList>
            <person name="Touchon M."/>
            <person name="Hoede C."/>
            <person name="Tenaillon O."/>
            <person name="Barbe V."/>
            <person name="Baeriswyl S."/>
            <person name="Bidet P."/>
            <person name="Bingen E."/>
            <person name="Bonacorsi S."/>
            <person name="Bouchier C."/>
            <person name="Bouvet O."/>
            <person name="Calteau A."/>
            <person name="Chiapello H."/>
            <person name="Clermont O."/>
            <person name="Cruveiller S."/>
            <person name="Danchin A."/>
            <person name="Diard M."/>
            <person name="Dossat C."/>
            <person name="Karoui M.E."/>
            <person name="Frapy E."/>
            <person name="Garry L."/>
            <person name="Ghigo J.M."/>
            <person name="Gilles A.M."/>
            <person name="Johnson J."/>
            <person name="Le Bouguenec C."/>
            <person name="Lescat M."/>
            <person name="Mangenot S."/>
            <person name="Martinez-Jehanne V."/>
            <person name="Matic I."/>
            <person name="Nassif X."/>
            <person name="Oztas S."/>
            <person name="Petit M.A."/>
            <person name="Pichon C."/>
            <person name="Rouy Z."/>
            <person name="Ruf C.S."/>
            <person name="Schneider D."/>
            <person name="Tourret J."/>
            <person name="Vacherie B."/>
            <person name="Vallenet D."/>
            <person name="Medigue C."/>
            <person name="Rocha E.P.C."/>
            <person name="Denamur E."/>
        </authorList>
    </citation>
    <scope>NUCLEOTIDE SEQUENCE [LARGE SCALE GENOMIC DNA]</scope>
    <source>
        <strain>ED1a</strain>
    </source>
</reference>
<gene>
    <name evidence="1" type="primary">sotB</name>
    <name type="ordered locus">ECED1_1656</name>
</gene>